<keyword id="KW-0963">Cytoplasm</keyword>
<keyword id="KW-0238">DNA-binding</keyword>
<keyword id="KW-0479">Metal-binding</keyword>
<keyword id="KW-0539">Nucleus</keyword>
<keyword id="KW-1185">Reference proteome</keyword>
<keyword id="KW-0677">Repeat</keyword>
<keyword id="KW-0678">Repressor</keyword>
<keyword id="KW-0804">Transcription</keyword>
<keyword id="KW-0805">Transcription regulation</keyword>
<keyword id="KW-0862">Zinc</keyword>
<keyword id="KW-0863">Zinc-finger</keyword>
<protein>
    <recommendedName>
        <fullName>Neurotrophin receptor-interacting factor homolog</fullName>
    </recommendedName>
    <alternativeName>
        <fullName>Zinc finger protein 274</fullName>
    </alternativeName>
</protein>
<organism>
    <name type="scientific">Bos taurus</name>
    <name type="common">Bovine</name>
    <dbReference type="NCBI Taxonomy" id="9913"/>
    <lineage>
        <taxon>Eukaryota</taxon>
        <taxon>Metazoa</taxon>
        <taxon>Chordata</taxon>
        <taxon>Craniata</taxon>
        <taxon>Vertebrata</taxon>
        <taxon>Euteleostomi</taxon>
        <taxon>Mammalia</taxon>
        <taxon>Eutheria</taxon>
        <taxon>Laurasiatheria</taxon>
        <taxon>Artiodactyla</taxon>
        <taxon>Ruminantia</taxon>
        <taxon>Pecora</taxon>
        <taxon>Bovidae</taxon>
        <taxon>Bovinae</taxon>
        <taxon>Bos</taxon>
    </lineage>
</organism>
<comment type="function">
    <text evidence="2">Probable transcription repressor. Specifically binds to the 3'-end of zinc-finger coding genes and recruiting chromatin-modifying proteins such as SETDB1 and TRIM28/KAP1, leading to transcription repression. The SETDB1-TRIM28-ZNF274 complex may play a role in recruiting ATRX to the 3'-exons of zinc-finger coding genes with atypical chromatin signatures to establish or maintain/protect H3K9me3 at these transcriptionally active regions (By similarity).</text>
</comment>
<comment type="subunit">
    <text evidence="2">Interacts with SETDB1 and TRIM28/KAP1. Interacts with ATRX. Forms a complex with ATRX, SETDB1 and TRIM28.</text>
</comment>
<comment type="subcellular location">
    <subcellularLocation>
        <location evidence="1">Cytoplasm</location>
    </subcellularLocation>
    <subcellularLocation>
        <location evidence="2">Nucleus</location>
        <location evidence="2">Nucleolus</location>
    </subcellularLocation>
</comment>
<comment type="similarity">
    <text evidence="7">Belongs to the krueppel C2H2-type zinc-finger protein family.</text>
</comment>
<evidence type="ECO:0000250" key="1"/>
<evidence type="ECO:0000250" key="2">
    <source>
        <dbReference type="UniProtKB" id="Q96GC6"/>
    </source>
</evidence>
<evidence type="ECO:0000255" key="3">
    <source>
        <dbReference type="PROSITE-ProRule" id="PRU00042"/>
    </source>
</evidence>
<evidence type="ECO:0000255" key="4">
    <source>
        <dbReference type="PROSITE-ProRule" id="PRU00119"/>
    </source>
</evidence>
<evidence type="ECO:0000255" key="5">
    <source>
        <dbReference type="PROSITE-ProRule" id="PRU00187"/>
    </source>
</evidence>
<evidence type="ECO:0000256" key="6">
    <source>
        <dbReference type="SAM" id="MobiDB-lite"/>
    </source>
</evidence>
<evidence type="ECO:0000305" key="7"/>
<sequence length="620" mass="69254">MASGLPTDWFREPVTFEDVALGFTPDEWGKLDLEQKSLYREVMLENYRNLVSVEHQLSKPDVVSQLEEEEELWSVERGIPQDTFSECPEAQLEPQLDPFPAGNPLMNIEVVEVLTLNQEVAVPRNAQIRALYAEDEGLSPEVLREPPQHLDKPTADPEMARQRFRGFHFEEVAGPREALAQLRELCCQWLRPEAHSKDQMLELLVLEQFLGALPEKLRLWVESQHPVDCRQAVALVEDVTWISEEETLPTQGAPGTLPPAAQQDTATWPVKALPEDPVTFLDVAVDFSTEEWGLLDPTQRTEYHDVMLETFGHLVSVGWETTLDSKQLTPQPGPPEEGPACPLKEEEGSSADDARPSTSGEALEAGAPGVWDTALKPVTLASENTLPPQPPGDSPQPQASTGPDRGRVSLQKAVPRKRLRKRDPWLKRGTRGACVKLPPKRGGAGKAVESGGDGGRRPCARNAPQITFTRIHKGSQVCRCSECGKTFRNPRYFSVHKKIHTGEKPYVCRDCGKAFVQSSSLRQHQRVHTGERPFVCHECGRTFNDRSAISQHLRTHTGAKPYPCPDCGKAFRQSSHLIRHQRTHTGERPYSCSKCGKAFTQSSHLIGHQKTHSRVKCKKK</sequence>
<name>ZN274_BOVIN</name>
<reference key="1">
    <citation type="submission" date="2007-07" db="EMBL/GenBank/DDBJ databases">
        <authorList>
            <consortium name="NIH - Mammalian Gene Collection (MGC) project"/>
        </authorList>
    </citation>
    <scope>NUCLEOTIDE SEQUENCE [LARGE SCALE MRNA]</scope>
    <source>
        <strain>Hereford</strain>
        <tissue>Thymus</tissue>
    </source>
</reference>
<reference key="2">
    <citation type="journal article" date="2005" name="BMC Genomics">
        <title>Characterization of 954 bovine full-CDS cDNA sequences.</title>
        <authorList>
            <person name="Harhay G.P."/>
            <person name="Sonstegard T.S."/>
            <person name="Keele J.W."/>
            <person name="Heaton M.P."/>
            <person name="Clawson M.L."/>
            <person name="Snelling W.M."/>
            <person name="Wiedmann R.T."/>
            <person name="Van Tassell C.P."/>
            <person name="Smith T.P.L."/>
        </authorList>
    </citation>
    <scope>NUCLEOTIDE SEQUENCE [LARGE SCALE MRNA] OF 1-404</scope>
</reference>
<dbReference type="EMBL" id="BC149474">
    <property type="protein sequence ID" value="AAI49475.1"/>
    <property type="molecule type" value="mRNA"/>
</dbReference>
<dbReference type="EMBL" id="BT026283">
    <property type="protein sequence ID" value="ABG81439.1"/>
    <property type="molecule type" value="mRNA"/>
</dbReference>
<dbReference type="RefSeq" id="NP_001094623.1">
    <property type="nucleotide sequence ID" value="NM_001101153.1"/>
</dbReference>
<dbReference type="RefSeq" id="XP_010813875.1">
    <property type="nucleotide sequence ID" value="XM_010815573.4"/>
</dbReference>
<dbReference type="SMR" id="A6QPT6"/>
<dbReference type="FunCoup" id="A6QPT6">
    <property type="interactions" value="847"/>
</dbReference>
<dbReference type="STRING" id="9913.ENSBTAP00000062648"/>
<dbReference type="PaxDb" id="9913-ENSBTAP00000012662"/>
<dbReference type="GeneID" id="534170"/>
<dbReference type="KEGG" id="bta:534170"/>
<dbReference type="CTD" id="10782"/>
<dbReference type="VEuPathDB" id="HostDB:ENSBTAG00000013353"/>
<dbReference type="eggNOG" id="KOG1721">
    <property type="taxonomic scope" value="Eukaryota"/>
</dbReference>
<dbReference type="HOGENOM" id="CLU_002678_49_6_1"/>
<dbReference type="InParanoid" id="A6QPT6"/>
<dbReference type="OrthoDB" id="6077919at2759"/>
<dbReference type="TreeFam" id="TF338018"/>
<dbReference type="Reactome" id="R-BTA-212436">
    <property type="pathway name" value="Generic Transcription Pathway"/>
</dbReference>
<dbReference type="Proteomes" id="UP000009136">
    <property type="component" value="Chromosome 18"/>
</dbReference>
<dbReference type="Bgee" id="ENSBTAG00000013353">
    <property type="expression patterns" value="Expressed in oocyte and 103 other cell types or tissues"/>
</dbReference>
<dbReference type="GO" id="GO:0005737">
    <property type="term" value="C:cytoplasm"/>
    <property type="evidence" value="ECO:0007669"/>
    <property type="project" value="UniProtKB-SubCell"/>
</dbReference>
<dbReference type="GO" id="GO:0005730">
    <property type="term" value="C:nucleolus"/>
    <property type="evidence" value="ECO:0007669"/>
    <property type="project" value="UniProtKB-SubCell"/>
</dbReference>
<dbReference type="GO" id="GO:0003682">
    <property type="term" value="F:chromatin binding"/>
    <property type="evidence" value="ECO:0000250"/>
    <property type="project" value="UniProtKB"/>
</dbReference>
<dbReference type="GO" id="GO:0000981">
    <property type="term" value="F:DNA-binding transcription factor activity, RNA polymerase II-specific"/>
    <property type="evidence" value="ECO:0000318"/>
    <property type="project" value="GO_Central"/>
</dbReference>
<dbReference type="GO" id="GO:0000978">
    <property type="term" value="F:RNA polymerase II cis-regulatory region sequence-specific DNA binding"/>
    <property type="evidence" value="ECO:0000318"/>
    <property type="project" value="GO_Central"/>
</dbReference>
<dbReference type="GO" id="GO:0008270">
    <property type="term" value="F:zinc ion binding"/>
    <property type="evidence" value="ECO:0007669"/>
    <property type="project" value="UniProtKB-KW"/>
</dbReference>
<dbReference type="GO" id="GO:0006338">
    <property type="term" value="P:chromatin remodeling"/>
    <property type="evidence" value="ECO:0000250"/>
    <property type="project" value="UniProtKB"/>
</dbReference>
<dbReference type="GO" id="GO:0006357">
    <property type="term" value="P:regulation of transcription by RNA polymerase II"/>
    <property type="evidence" value="ECO:0000318"/>
    <property type="project" value="GO_Central"/>
</dbReference>
<dbReference type="CDD" id="cd07765">
    <property type="entry name" value="KRAB_A-box"/>
    <property type="match status" value="2"/>
</dbReference>
<dbReference type="CDD" id="cd07936">
    <property type="entry name" value="SCAN"/>
    <property type="match status" value="1"/>
</dbReference>
<dbReference type="FunFam" id="3.30.160.60:FF:000965">
    <property type="entry name" value="Neurotrophin receptor-interacting factor homolog"/>
    <property type="match status" value="1"/>
</dbReference>
<dbReference type="FunFam" id="3.30.160.60:FF:001712">
    <property type="entry name" value="Neurotrophin receptor-interacting factor homolog"/>
    <property type="match status" value="1"/>
</dbReference>
<dbReference type="FunFam" id="3.30.160.60:FF:001429">
    <property type="entry name" value="neurotrophin receptor-interacting factor homolog"/>
    <property type="match status" value="1"/>
</dbReference>
<dbReference type="FunFam" id="1.10.4020.10:FF:000001">
    <property type="entry name" value="zinc finger protein 263 isoform X1"/>
    <property type="match status" value="1"/>
</dbReference>
<dbReference type="FunFam" id="3.30.160.60:FF:000737">
    <property type="entry name" value="Zinc finger protein 565"/>
    <property type="match status" value="1"/>
</dbReference>
<dbReference type="FunFam" id="3.30.160.60:FF:001784">
    <property type="entry name" value="Zinc finger protein 768"/>
    <property type="match status" value="1"/>
</dbReference>
<dbReference type="Gene3D" id="6.10.140.140">
    <property type="match status" value="2"/>
</dbReference>
<dbReference type="Gene3D" id="3.30.160.60">
    <property type="entry name" value="Classic Zinc Finger"/>
    <property type="match status" value="5"/>
</dbReference>
<dbReference type="Gene3D" id="1.10.4020.10">
    <property type="entry name" value="DNA breaking-rejoining enzymes"/>
    <property type="match status" value="1"/>
</dbReference>
<dbReference type="InterPro" id="IPR001909">
    <property type="entry name" value="KRAB"/>
</dbReference>
<dbReference type="InterPro" id="IPR036051">
    <property type="entry name" value="KRAB_dom_sf"/>
</dbReference>
<dbReference type="InterPro" id="IPR003309">
    <property type="entry name" value="SCAN_dom"/>
</dbReference>
<dbReference type="InterPro" id="IPR038269">
    <property type="entry name" value="SCAN_sf"/>
</dbReference>
<dbReference type="InterPro" id="IPR036236">
    <property type="entry name" value="Znf_C2H2_sf"/>
</dbReference>
<dbReference type="InterPro" id="IPR013087">
    <property type="entry name" value="Znf_C2H2_type"/>
</dbReference>
<dbReference type="PANTHER" id="PTHR24381">
    <property type="entry name" value="ZINC FINGER PROTEIN"/>
    <property type="match status" value="1"/>
</dbReference>
<dbReference type="PANTHER" id="PTHR24381:SF390">
    <property type="entry name" value="ZINC FINGER PROTEIN 37 HOMOLOG"/>
    <property type="match status" value="1"/>
</dbReference>
<dbReference type="Pfam" id="PF01352">
    <property type="entry name" value="KRAB"/>
    <property type="match status" value="2"/>
</dbReference>
<dbReference type="Pfam" id="PF02023">
    <property type="entry name" value="SCAN"/>
    <property type="match status" value="1"/>
</dbReference>
<dbReference type="Pfam" id="PF00096">
    <property type="entry name" value="zf-C2H2"/>
    <property type="match status" value="5"/>
</dbReference>
<dbReference type="SMART" id="SM00349">
    <property type="entry name" value="KRAB"/>
    <property type="match status" value="2"/>
</dbReference>
<dbReference type="SMART" id="SM00431">
    <property type="entry name" value="SCAN"/>
    <property type="match status" value="1"/>
</dbReference>
<dbReference type="SMART" id="SM00355">
    <property type="entry name" value="ZnF_C2H2"/>
    <property type="match status" value="5"/>
</dbReference>
<dbReference type="SUPFAM" id="SSF57667">
    <property type="entry name" value="beta-beta-alpha zinc fingers"/>
    <property type="match status" value="3"/>
</dbReference>
<dbReference type="SUPFAM" id="SSF109640">
    <property type="entry name" value="KRAB domain (Kruppel-associated box)"/>
    <property type="match status" value="2"/>
</dbReference>
<dbReference type="SUPFAM" id="SSF47353">
    <property type="entry name" value="Retrovirus capsid dimerization domain-like"/>
    <property type="match status" value="1"/>
</dbReference>
<dbReference type="PROSITE" id="PS50805">
    <property type="entry name" value="KRAB"/>
    <property type="match status" value="2"/>
</dbReference>
<dbReference type="PROSITE" id="PS50804">
    <property type="entry name" value="SCAN_BOX"/>
    <property type="match status" value="1"/>
</dbReference>
<dbReference type="PROSITE" id="PS00028">
    <property type="entry name" value="ZINC_FINGER_C2H2_1"/>
    <property type="match status" value="5"/>
</dbReference>
<dbReference type="PROSITE" id="PS50157">
    <property type="entry name" value="ZINC_FINGER_C2H2_2"/>
    <property type="match status" value="5"/>
</dbReference>
<feature type="chain" id="PRO_0000406964" description="Neurotrophin receptor-interacting factor homolog">
    <location>
        <begin position="1"/>
        <end position="620"/>
    </location>
</feature>
<feature type="domain" description="KRAB 1" evidence="4">
    <location>
        <begin position="14"/>
        <end position="85"/>
    </location>
</feature>
<feature type="domain" description="SCAN box" evidence="5">
    <location>
        <begin position="161"/>
        <end position="243"/>
    </location>
</feature>
<feature type="domain" description="KRAB 2" evidence="4">
    <location>
        <begin position="278"/>
        <end position="351"/>
    </location>
</feature>
<feature type="zinc finger region" description="C2H2-type 1" evidence="3">
    <location>
        <begin position="478"/>
        <end position="500"/>
    </location>
</feature>
<feature type="zinc finger region" description="C2H2-type 2" evidence="3">
    <location>
        <begin position="506"/>
        <end position="528"/>
    </location>
</feature>
<feature type="zinc finger region" description="C2H2-type 3" evidence="3">
    <location>
        <begin position="534"/>
        <end position="556"/>
    </location>
</feature>
<feature type="zinc finger region" description="C2H2-type 4" evidence="3">
    <location>
        <begin position="562"/>
        <end position="584"/>
    </location>
</feature>
<feature type="zinc finger region" description="C2H2-type 5" evidence="3">
    <location>
        <begin position="590"/>
        <end position="612"/>
    </location>
</feature>
<feature type="region of interest" description="Disordered" evidence="6">
    <location>
        <begin position="324"/>
        <end position="370"/>
    </location>
</feature>
<feature type="region of interest" description="Disordered" evidence="6">
    <location>
        <begin position="382"/>
        <end position="458"/>
    </location>
</feature>
<feature type="compositionally biased region" description="Basic and acidic residues" evidence="6">
    <location>
        <begin position="343"/>
        <end position="355"/>
    </location>
</feature>
<proteinExistence type="evidence at transcript level"/>
<gene>
    <name type="primary">ZNF274</name>
</gene>
<accession>A6QPT6</accession>
<accession>Q0V8D6</accession>